<gene>
    <name type="primary">lsm12a</name>
    <name type="synonym">lsm12</name>
</gene>
<reference key="1">
    <citation type="submission" date="2003-10" db="EMBL/GenBank/DDBJ databases">
        <authorList>
            <consortium name="NIH - Zebrafish Gene Collection (ZGC) project"/>
        </authorList>
    </citation>
    <scope>NUCLEOTIDE SEQUENCE [LARGE SCALE MRNA]</scope>
    <source>
        <tissue>Kidney</tissue>
    </source>
</reference>
<evidence type="ECO:0000255" key="1">
    <source>
        <dbReference type="PROSITE-ProRule" id="PRU01345"/>
    </source>
</evidence>
<evidence type="ECO:0000255" key="2">
    <source>
        <dbReference type="PROSITE-ProRule" id="PRU01346"/>
    </source>
</evidence>
<evidence type="ECO:0000256" key="3">
    <source>
        <dbReference type="SAM" id="MobiDB-lite"/>
    </source>
</evidence>
<evidence type="ECO:0000305" key="4"/>
<name>LS12A_DANRE</name>
<dbReference type="EMBL" id="BC059805">
    <property type="protein sequence ID" value="AAH59805.1"/>
    <property type="molecule type" value="mRNA"/>
</dbReference>
<dbReference type="RefSeq" id="NP_998313.1">
    <property type="nucleotide sequence ID" value="NM_213148.1"/>
</dbReference>
<dbReference type="FunCoup" id="Q6PBA2">
    <property type="interactions" value="883"/>
</dbReference>
<dbReference type="STRING" id="7955.ENSDARP00000152353"/>
<dbReference type="PaxDb" id="7955-ENSDARP00000067525"/>
<dbReference type="Ensembl" id="ENSDART00000182032">
    <property type="protein sequence ID" value="ENSDARP00000152353"/>
    <property type="gene ID" value="ENSDARG00000109510"/>
</dbReference>
<dbReference type="GeneID" id="406422"/>
<dbReference type="KEGG" id="dre:406422"/>
<dbReference type="AGR" id="ZFIN:ZDB-GENE-040426-2164"/>
<dbReference type="CTD" id="406422"/>
<dbReference type="ZFIN" id="ZDB-GENE-040426-2164">
    <property type="gene designation" value="lsm12b"/>
</dbReference>
<dbReference type="eggNOG" id="KOG4401">
    <property type="taxonomic scope" value="Eukaryota"/>
</dbReference>
<dbReference type="HOGENOM" id="CLU_073383_3_0_1"/>
<dbReference type="InParanoid" id="Q6PBA2"/>
<dbReference type="OMA" id="FEGELYC"/>
<dbReference type="OrthoDB" id="1057137at2759"/>
<dbReference type="PhylomeDB" id="Q6PBA2"/>
<dbReference type="TreeFam" id="TF324296"/>
<dbReference type="PRO" id="PR:Q6PBA2"/>
<dbReference type="Proteomes" id="UP000000437">
    <property type="component" value="Chromosome 12"/>
</dbReference>
<dbReference type="Bgee" id="ENSDARG00000109510">
    <property type="expression patterns" value="Expressed in muscle tissue and 29 other cell types or tissues"/>
</dbReference>
<dbReference type="GO" id="GO:0003723">
    <property type="term" value="F:RNA binding"/>
    <property type="evidence" value="ECO:0007669"/>
    <property type="project" value="InterPro"/>
</dbReference>
<dbReference type="CDD" id="cd01735">
    <property type="entry name" value="LSm12_N"/>
    <property type="match status" value="1"/>
</dbReference>
<dbReference type="InterPro" id="IPR047574">
    <property type="entry name" value="AD"/>
</dbReference>
<dbReference type="InterPro" id="IPR039683">
    <property type="entry name" value="Lsm12-like"/>
</dbReference>
<dbReference type="InterPro" id="IPR019181">
    <property type="entry name" value="LSM12_ABD"/>
</dbReference>
<dbReference type="InterPro" id="IPR048478">
    <property type="entry name" value="LSM12_LSM"/>
</dbReference>
<dbReference type="InterPro" id="IPR047575">
    <property type="entry name" value="Sm"/>
</dbReference>
<dbReference type="PANTHER" id="PTHR13542">
    <property type="entry name" value="LSM12 HOMOLOG"/>
    <property type="match status" value="1"/>
</dbReference>
<dbReference type="Pfam" id="PF09793">
    <property type="entry name" value="AD"/>
    <property type="match status" value="1"/>
</dbReference>
<dbReference type="Pfam" id="PF21166">
    <property type="entry name" value="LSM12_LSM"/>
    <property type="match status" value="1"/>
</dbReference>
<dbReference type="SMART" id="SM00995">
    <property type="entry name" value="AD"/>
    <property type="match status" value="1"/>
</dbReference>
<dbReference type="PROSITE" id="PS52001">
    <property type="entry name" value="AD"/>
    <property type="match status" value="1"/>
</dbReference>
<dbReference type="PROSITE" id="PS52002">
    <property type="entry name" value="SM"/>
    <property type="match status" value="1"/>
</dbReference>
<feature type="chain" id="PRO_0000305130" description="Protein LSM12 homolog A">
    <location>
        <begin position="1"/>
        <end position="196"/>
    </location>
</feature>
<feature type="domain" description="Sm" evidence="2">
    <location>
        <begin position="3"/>
        <end position="73"/>
    </location>
</feature>
<feature type="domain" description="AD" evidence="1">
    <location>
        <begin position="81"/>
        <end position="175"/>
    </location>
</feature>
<feature type="region of interest" description="Disordered" evidence="3">
    <location>
        <begin position="174"/>
        <end position="196"/>
    </location>
</feature>
<feature type="compositionally biased region" description="Polar residues" evidence="3">
    <location>
        <begin position="177"/>
        <end position="196"/>
    </location>
</feature>
<organism>
    <name type="scientific">Danio rerio</name>
    <name type="common">Zebrafish</name>
    <name type="synonym">Brachydanio rerio</name>
    <dbReference type="NCBI Taxonomy" id="7955"/>
    <lineage>
        <taxon>Eukaryota</taxon>
        <taxon>Metazoa</taxon>
        <taxon>Chordata</taxon>
        <taxon>Craniata</taxon>
        <taxon>Vertebrata</taxon>
        <taxon>Euteleostomi</taxon>
        <taxon>Actinopterygii</taxon>
        <taxon>Neopterygii</taxon>
        <taxon>Teleostei</taxon>
        <taxon>Ostariophysi</taxon>
        <taxon>Cypriniformes</taxon>
        <taxon>Danionidae</taxon>
        <taxon>Danioninae</taxon>
        <taxon>Danio</taxon>
    </lineage>
</organism>
<accession>Q6PBA2</accession>
<sequence>MAAPGPGEYFSVGSHVSCLTCLGQRLQGEVVAFDYPSKMLTLKCPSSSGKPNLSDVILINLAYVSEVDIINDRTETPPPLASLNISKLANRARTEKEDKLSQAYAISAGVSIEGQQLFQTIHKTIKDCKWQEKNIIVMDDVVISPPYQVENCKGKEGSALSHIRKIVEKHFRDVESQKTMQRSQAQQTQKDSSLSS</sequence>
<protein>
    <recommendedName>
        <fullName>Protein LSM12 homolog A</fullName>
    </recommendedName>
</protein>
<keyword id="KW-1185">Reference proteome</keyword>
<proteinExistence type="evidence at transcript level"/>
<comment type="similarity">
    <text evidence="4">Belongs to the LSM12 family.</text>
</comment>